<evidence type="ECO:0000255" key="1">
    <source>
        <dbReference type="HAMAP-Rule" id="MF_00165"/>
    </source>
</evidence>
<gene>
    <name evidence="1" type="primary">tmk</name>
    <name type="ordered locus">TTE0094</name>
</gene>
<dbReference type="EC" id="2.7.4.9" evidence="1"/>
<dbReference type="EMBL" id="AE008691">
    <property type="protein sequence ID" value="AAM23398.1"/>
    <property type="molecule type" value="Genomic_DNA"/>
</dbReference>
<dbReference type="RefSeq" id="WP_011024605.1">
    <property type="nucleotide sequence ID" value="NC_003869.1"/>
</dbReference>
<dbReference type="SMR" id="Q8RDE6"/>
<dbReference type="STRING" id="273068.TTE0094"/>
<dbReference type="KEGG" id="tte:TTE0094"/>
<dbReference type="eggNOG" id="COG0125">
    <property type="taxonomic scope" value="Bacteria"/>
</dbReference>
<dbReference type="HOGENOM" id="CLU_049131_0_2_9"/>
<dbReference type="OrthoDB" id="9774907at2"/>
<dbReference type="Proteomes" id="UP000000555">
    <property type="component" value="Chromosome"/>
</dbReference>
<dbReference type="GO" id="GO:0005829">
    <property type="term" value="C:cytosol"/>
    <property type="evidence" value="ECO:0007669"/>
    <property type="project" value="TreeGrafter"/>
</dbReference>
<dbReference type="GO" id="GO:0005524">
    <property type="term" value="F:ATP binding"/>
    <property type="evidence" value="ECO:0007669"/>
    <property type="project" value="UniProtKB-UniRule"/>
</dbReference>
<dbReference type="GO" id="GO:0004798">
    <property type="term" value="F:dTMP kinase activity"/>
    <property type="evidence" value="ECO:0007669"/>
    <property type="project" value="UniProtKB-UniRule"/>
</dbReference>
<dbReference type="GO" id="GO:0006233">
    <property type="term" value="P:dTDP biosynthetic process"/>
    <property type="evidence" value="ECO:0007669"/>
    <property type="project" value="InterPro"/>
</dbReference>
<dbReference type="GO" id="GO:0006235">
    <property type="term" value="P:dTTP biosynthetic process"/>
    <property type="evidence" value="ECO:0007669"/>
    <property type="project" value="UniProtKB-UniRule"/>
</dbReference>
<dbReference type="GO" id="GO:0006227">
    <property type="term" value="P:dUDP biosynthetic process"/>
    <property type="evidence" value="ECO:0007669"/>
    <property type="project" value="TreeGrafter"/>
</dbReference>
<dbReference type="CDD" id="cd01672">
    <property type="entry name" value="TMPK"/>
    <property type="match status" value="1"/>
</dbReference>
<dbReference type="FunFam" id="3.40.50.300:FF:000225">
    <property type="entry name" value="Thymidylate kinase"/>
    <property type="match status" value="1"/>
</dbReference>
<dbReference type="Gene3D" id="3.40.50.300">
    <property type="entry name" value="P-loop containing nucleotide triphosphate hydrolases"/>
    <property type="match status" value="1"/>
</dbReference>
<dbReference type="HAMAP" id="MF_00165">
    <property type="entry name" value="Thymidylate_kinase"/>
    <property type="match status" value="1"/>
</dbReference>
<dbReference type="InterPro" id="IPR027417">
    <property type="entry name" value="P-loop_NTPase"/>
</dbReference>
<dbReference type="InterPro" id="IPR039430">
    <property type="entry name" value="Thymidylate_kin-like_dom"/>
</dbReference>
<dbReference type="InterPro" id="IPR018095">
    <property type="entry name" value="Thymidylate_kin_CS"/>
</dbReference>
<dbReference type="InterPro" id="IPR018094">
    <property type="entry name" value="Thymidylate_kinase"/>
</dbReference>
<dbReference type="NCBIfam" id="TIGR00041">
    <property type="entry name" value="DTMP_kinase"/>
    <property type="match status" value="1"/>
</dbReference>
<dbReference type="PANTHER" id="PTHR10344">
    <property type="entry name" value="THYMIDYLATE KINASE"/>
    <property type="match status" value="1"/>
</dbReference>
<dbReference type="PANTHER" id="PTHR10344:SF4">
    <property type="entry name" value="UMP-CMP KINASE 2, MITOCHONDRIAL"/>
    <property type="match status" value="1"/>
</dbReference>
<dbReference type="Pfam" id="PF02223">
    <property type="entry name" value="Thymidylate_kin"/>
    <property type="match status" value="1"/>
</dbReference>
<dbReference type="SUPFAM" id="SSF52540">
    <property type="entry name" value="P-loop containing nucleoside triphosphate hydrolases"/>
    <property type="match status" value="1"/>
</dbReference>
<dbReference type="PROSITE" id="PS01331">
    <property type="entry name" value="THYMIDYLATE_KINASE"/>
    <property type="match status" value="1"/>
</dbReference>
<proteinExistence type="inferred from homology"/>
<keyword id="KW-0067">ATP-binding</keyword>
<keyword id="KW-0418">Kinase</keyword>
<keyword id="KW-0545">Nucleotide biosynthesis</keyword>
<keyword id="KW-0547">Nucleotide-binding</keyword>
<keyword id="KW-1185">Reference proteome</keyword>
<keyword id="KW-0808">Transferase</keyword>
<organism>
    <name type="scientific">Caldanaerobacter subterraneus subsp. tengcongensis (strain DSM 15242 / JCM 11007 / NBRC 100824 / MB4)</name>
    <name type="common">Thermoanaerobacter tengcongensis</name>
    <dbReference type="NCBI Taxonomy" id="273068"/>
    <lineage>
        <taxon>Bacteria</taxon>
        <taxon>Bacillati</taxon>
        <taxon>Bacillota</taxon>
        <taxon>Clostridia</taxon>
        <taxon>Thermoanaerobacterales</taxon>
        <taxon>Thermoanaerobacteraceae</taxon>
        <taxon>Caldanaerobacter</taxon>
    </lineage>
</organism>
<reference key="1">
    <citation type="journal article" date="2002" name="Genome Res.">
        <title>A complete sequence of the T. tengcongensis genome.</title>
        <authorList>
            <person name="Bao Q."/>
            <person name="Tian Y."/>
            <person name="Li W."/>
            <person name="Xu Z."/>
            <person name="Xuan Z."/>
            <person name="Hu S."/>
            <person name="Dong W."/>
            <person name="Yang J."/>
            <person name="Chen Y."/>
            <person name="Xue Y."/>
            <person name="Xu Y."/>
            <person name="Lai X."/>
            <person name="Huang L."/>
            <person name="Dong X."/>
            <person name="Ma Y."/>
            <person name="Ling L."/>
            <person name="Tan H."/>
            <person name="Chen R."/>
            <person name="Wang J."/>
            <person name="Yu J."/>
            <person name="Yang H."/>
        </authorList>
    </citation>
    <scope>NUCLEOTIDE SEQUENCE [LARGE SCALE GENOMIC DNA]</scope>
    <source>
        <strain>DSM 15242 / JCM 11007 / NBRC 100824 / MB4</strain>
    </source>
</reference>
<accession>Q8RDE6</accession>
<sequence length="208" mass="23779">MRGKFISFEGIDGCGKTTQVKLLEEHLKKEGYDLLVLREPGGTRVGEKVREILLDRENLIFPVTEMLLYASSRAQLVEEKILPALSKGQMVIVDRFIDSSYVYQGYARGLGLEKVKIVNEIATKGLFPDITVYIDITPEEAIKRRQGKKADRLEGEDYEFHKKVREGYLRLVKDFPERFILIDGMQEVLAVHKMVVKAVEEYLKGAKV</sequence>
<comment type="function">
    <text evidence="1">Phosphorylation of dTMP to form dTDP in both de novo and salvage pathways of dTTP synthesis.</text>
</comment>
<comment type="catalytic activity">
    <reaction evidence="1">
        <text>dTMP + ATP = dTDP + ADP</text>
        <dbReference type="Rhea" id="RHEA:13517"/>
        <dbReference type="ChEBI" id="CHEBI:30616"/>
        <dbReference type="ChEBI" id="CHEBI:58369"/>
        <dbReference type="ChEBI" id="CHEBI:63528"/>
        <dbReference type="ChEBI" id="CHEBI:456216"/>
        <dbReference type="EC" id="2.7.4.9"/>
    </reaction>
</comment>
<comment type="similarity">
    <text evidence="1">Belongs to the thymidylate kinase family.</text>
</comment>
<protein>
    <recommendedName>
        <fullName evidence="1">Thymidylate kinase</fullName>
        <ecNumber evidence="1">2.7.4.9</ecNumber>
    </recommendedName>
    <alternativeName>
        <fullName evidence="1">dTMP kinase</fullName>
    </alternativeName>
</protein>
<feature type="chain" id="PRO_0000155362" description="Thymidylate kinase">
    <location>
        <begin position="1"/>
        <end position="208"/>
    </location>
</feature>
<feature type="binding site" evidence="1">
    <location>
        <begin position="10"/>
        <end position="17"/>
    </location>
    <ligand>
        <name>ATP</name>
        <dbReference type="ChEBI" id="CHEBI:30616"/>
    </ligand>
</feature>
<name>KTHY_CALS4</name>